<sequence length="431" mass="47211">MAAPMEVVVCTDAAAQLWSCVVWELHSGANLLTYRGGQAGPRGLALLNGEYLLAAQQGKNYICAWELQRKDQLQQKIMCPGPVTCLTTAPNGLYVLAGIAESIYLWEVCTGNLLVILSRHYQDVSCLKFTGDGSHFVSAGKDCLALAWSLCSVLQADPSRILAPRHVWSQHTLPITDLHCGFGGPMARVATASLDQTVKLWAISSGDLLLSVLFDMGITSVTMDLAEHHIFCGGSDGSIFQVDLCSWPGLREHSFQPEQNTGKVFKGHRNQVTCLSVSTDGSVLLSGSHDESVRLWDVKSKQCLRTVTLKGPVTNAAIILAPPSMLNPEFRPSLPLPHFNKHLLGAEHGDEAQGGGLRLQLGLHLQGKEPSYLERLEQLQAVLSSYLEKNMLGSQMLPARVFDLEDEVRSLRKINRDLFDFSTRIITRPSK</sequence>
<evidence type="ECO:0000250" key="1">
    <source>
        <dbReference type="UniProtKB" id="A0A1L8HX76"/>
    </source>
</evidence>
<evidence type="ECO:0000250" key="2">
    <source>
        <dbReference type="UniProtKB" id="Q68EI0"/>
    </source>
</evidence>
<evidence type="ECO:0000250" key="3">
    <source>
        <dbReference type="UniProtKB" id="Q9BV38"/>
    </source>
</evidence>
<evidence type="ECO:0000269" key="4">
    <source>
    </source>
</evidence>
<evidence type="ECO:0000305" key="5"/>
<proteinExistence type="evidence at protein level"/>
<name>WDR18_MOUSE</name>
<reference key="1">
    <citation type="journal article" date="2005" name="Science">
        <title>The transcriptional landscape of the mammalian genome.</title>
        <authorList>
            <person name="Carninci P."/>
            <person name="Kasukawa T."/>
            <person name="Katayama S."/>
            <person name="Gough J."/>
            <person name="Frith M.C."/>
            <person name="Maeda N."/>
            <person name="Oyama R."/>
            <person name="Ravasi T."/>
            <person name="Lenhard B."/>
            <person name="Wells C."/>
            <person name="Kodzius R."/>
            <person name="Shimokawa K."/>
            <person name="Bajic V.B."/>
            <person name="Brenner S.E."/>
            <person name="Batalov S."/>
            <person name="Forrest A.R."/>
            <person name="Zavolan M."/>
            <person name="Davis M.J."/>
            <person name="Wilming L.G."/>
            <person name="Aidinis V."/>
            <person name="Allen J.E."/>
            <person name="Ambesi-Impiombato A."/>
            <person name="Apweiler R."/>
            <person name="Aturaliya R.N."/>
            <person name="Bailey T.L."/>
            <person name="Bansal M."/>
            <person name="Baxter L."/>
            <person name="Beisel K.W."/>
            <person name="Bersano T."/>
            <person name="Bono H."/>
            <person name="Chalk A.M."/>
            <person name="Chiu K.P."/>
            <person name="Choudhary V."/>
            <person name="Christoffels A."/>
            <person name="Clutterbuck D.R."/>
            <person name="Crowe M.L."/>
            <person name="Dalla E."/>
            <person name="Dalrymple B.P."/>
            <person name="de Bono B."/>
            <person name="Della Gatta G."/>
            <person name="di Bernardo D."/>
            <person name="Down T."/>
            <person name="Engstrom P."/>
            <person name="Fagiolini M."/>
            <person name="Faulkner G."/>
            <person name="Fletcher C.F."/>
            <person name="Fukushima T."/>
            <person name="Furuno M."/>
            <person name="Futaki S."/>
            <person name="Gariboldi M."/>
            <person name="Georgii-Hemming P."/>
            <person name="Gingeras T.R."/>
            <person name="Gojobori T."/>
            <person name="Green R.E."/>
            <person name="Gustincich S."/>
            <person name="Harbers M."/>
            <person name="Hayashi Y."/>
            <person name="Hensch T.K."/>
            <person name="Hirokawa N."/>
            <person name="Hill D."/>
            <person name="Huminiecki L."/>
            <person name="Iacono M."/>
            <person name="Ikeo K."/>
            <person name="Iwama A."/>
            <person name="Ishikawa T."/>
            <person name="Jakt M."/>
            <person name="Kanapin A."/>
            <person name="Katoh M."/>
            <person name="Kawasawa Y."/>
            <person name="Kelso J."/>
            <person name="Kitamura H."/>
            <person name="Kitano H."/>
            <person name="Kollias G."/>
            <person name="Krishnan S.P."/>
            <person name="Kruger A."/>
            <person name="Kummerfeld S.K."/>
            <person name="Kurochkin I.V."/>
            <person name="Lareau L.F."/>
            <person name="Lazarevic D."/>
            <person name="Lipovich L."/>
            <person name="Liu J."/>
            <person name="Liuni S."/>
            <person name="McWilliam S."/>
            <person name="Madan Babu M."/>
            <person name="Madera M."/>
            <person name="Marchionni L."/>
            <person name="Matsuda H."/>
            <person name="Matsuzawa S."/>
            <person name="Miki H."/>
            <person name="Mignone F."/>
            <person name="Miyake S."/>
            <person name="Morris K."/>
            <person name="Mottagui-Tabar S."/>
            <person name="Mulder N."/>
            <person name="Nakano N."/>
            <person name="Nakauchi H."/>
            <person name="Ng P."/>
            <person name="Nilsson R."/>
            <person name="Nishiguchi S."/>
            <person name="Nishikawa S."/>
            <person name="Nori F."/>
            <person name="Ohara O."/>
            <person name="Okazaki Y."/>
            <person name="Orlando V."/>
            <person name="Pang K.C."/>
            <person name="Pavan W.J."/>
            <person name="Pavesi G."/>
            <person name="Pesole G."/>
            <person name="Petrovsky N."/>
            <person name="Piazza S."/>
            <person name="Reed J."/>
            <person name="Reid J.F."/>
            <person name="Ring B.Z."/>
            <person name="Ringwald M."/>
            <person name="Rost B."/>
            <person name="Ruan Y."/>
            <person name="Salzberg S.L."/>
            <person name="Sandelin A."/>
            <person name="Schneider C."/>
            <person name="Schoenbach C."/>
            <person name="Sekiguchi K."/>
            <person name="Semple C.A."/>
            <person name="Seno S."/>
            <person name="Sessa L."/>
            <person name="Sheng Y."/>
            <person name="Shibata Y."/>
            <person name="Shimada H."/>
            <person name="Shimada K."/>
            <person name="Silva D."/>
            <person name="Sinclair B."/>
            <person name="Sperling S."/>
            <person name="Stupka E."/>
            <person name="Sugiura K."/>
            <person name="Sultana R."/>
            <person name="Takenaka Y."/>
            <person name="Taki K."/>
            <person name="Tammoja K."/>
            <person name="Tan S.L."/>
            <person name="Tang S."/>
            <person name="Taylor M.S."/>
            <person name="Tegner J."/>
            <person name="Teichmann S.A."/>
            <person name="Ueda H.R."/>
            <person name="van Nimwegen E."/>
            <person name="Verardo R."/>
            <person name="Wei C.L."/>
            <person name="Yagi K."/>
            <person name="Yamanishi H."/>
            <person name="Zabarovsky E."/>
            <person name="Zhu S."/>
            <person name="Zimmer A."/>
            <person name="Hide W."/>
            <person name="Bult C."/>
            <person name="Grimmond S.M."/>
            <person name="Teasdale R.D."/>
            <person name="Liu E.T."/>
            <person name="Brusic V."/>
            <person name="Quackenbush J."/>
            <person name="Wahlestedt C."/>
            <person name="Mattick J.S."/>
            <person name="Hume D.A."/>
            <person name="Kai C."/>
            <person name="Sasaki D."/>
            <person name="Tomaru Y."/>
            <person name="Fukuda S."/>
            <person name="Kanamori-Katayama M."/>
            <person name="Suzuki M."/>
            <person name="Aoki J."/>
            <person name="Arakawa T."/>
            <person name="Iida J."/>
            <person name="Imamura K."/>
            <person name="Itoh M."/>
            <person name="Kato T."/>
            <person name="Kawaji H."/>
            <person name="Kawagashira N."/>
            <person name="Kawashima T."/>
            <person name="Kojima M."/>
            <person name="Kondo S."/>
            <person name="Konno H."/>
            <person name="Nakano K."/>
            <person name="Ninomiya N."/>
            <person name="Nishio T."/>
            <person name="Okada M."/>
            <person name="Plessy C."/>
            <person name="Shibata K."/>
            <person name="Shiraki T."/>
            <person name="Suzuki S."/>
            <person name="Tagami M."/>
            <person name="Waki K."/>
            <person name="Watahiki A."/>
            <person name="Okamura-Oho Y."/>
            <person name="Suzuki H."/>
            <person name="Kawai J."/>
            <person name="Hayashizaki Y."/>
        </authorList>
    </citation>
    <scope>NUCLEOTIDE SEQUENCE [LARGE SCALE MRNA]</scope>
    <source>
        <strain>C57BL/6J</strain>
        <tissue>Head</tissue>
        <tissue>Kidney</tissue>
    </source>
</reference>
<reference key="2">
    <citation type="journal article" date="2004" name="Genome Res.">
        <title>The status, quality, and expansion of the NIH full-length cDNA project: the Mammalian Gene Collection (MGC).</title>
        <authorList>
            <consortium name="The MGC Project Team"/>
        </authorList>
    </citation>
    <scope>NUCLEOTIDE SEQUENCE [LARGE SCALE MRNA]</scope>
    <source>
        <strain>NMRI</strain>
        <tissue>Mammary tumor</tissue>
    </source>
</reference>
<reference key="3">
    <citation type="journal article" date="2010" name="Cell">
        <title>A tissue-specific atlas of mouse protein phosphorylation and expression.</title>
        <authorList>
            <person name="Huttlin E.L."/>
            <person name="Jedrychowski M.P."/>
            <person name="Elias J.E."/>
            <person name="Goswami T."/>
            <person name="Rad R."/>
            <person name="Beausoleil S.A."/>
            <person name="Villen J."/>
            <person name="Haas W."/>
            <person name="Sowa M.E."/>
            <person name="Gygi S.P."/>
        </authorList>
    </citation>
    <scope>IDENTIFICATION BY MASS SPECTROMETRY [LARGE SCALE ANALYSIS]</scope>
    <source>
        <tissue>Brain</tissue>
        <tissue>Kidney</tissue>
        <tissue>Spleen</tissue>
        <tissue>Testis</tissue>
    </source>
</reference>
<reference key="4">
    <citation type="journal article" date="2012" name="Mol. Cell. Proteomics">
        <title>Five friends of methylated chromatin target of protein-arginine-methyltransferase[prmt]-1 (chtop), a complex linking arginine methylation to desumoylation.</title>
        <authorList>
            <person name="Fanis P."/>
            <person name="Gillemans N."/>
            <person name="Aghajanirefah A."/>
            <person name="Pourfarzad F."/>
            <person name="Demmers J."/>
            <person name="Esteghamat F."/>
            <person name="Vadlamudi R.K."/>
            <person name="Grosveld F."/>
            <person name="Philipsen S."/>
            <person name="van Dijk T.B."/>
        </authorList>
    </citation>
    <scope>FUNCTION</scope>
    <scope>IDENTIFICATION IN THE 5FMC COMPLEX</scope>
    <scope>INTERACTION OF THE 5FMC COMPLEX WITH CHTOP AND ZNF148</scope>
    <scope>INTERACTION WITH NOL9</scope>
    <scope>SUBCELLULAR LOCATION</scope>
</reference>
<organism>
    <name type="scientific">Mus musculus</name>
    <name type="common">Mouse</name>
    <dbReference type="NCBI Taxonomy" id="10090"/>
    <lineage>
        <taxon>Eukaryota</taxon>
        <taxon>Metazoa</taxon>
        <taxon>Chordata</taxon>
        <taxon>Craniata</taxon>
        <taxon>Vertebrata</taxon>
        <taxon>Euteleostomi</taxon>
        <taxon>Mammalia</taxon>
        <taxon>Eutheria</taxon>
        <taxon>Euarchontoglires</taxon>
        <taxon>Glires</taxon>
        <taxon>Rodentia</taxon>
        <taxon>Myomorpha</taxon>
        <taxon>Muroidea</taxon>
        <taxon>Muridae</taxon>
        <taxon>Murinae</taxon>
        <taxon>Mus</taxon>
        <taxon>Mus</taxon>
    </lineage>
</organism>
<gene>
    <name type="primary">Wdr18</name>
</gene>
<protein>
    <recommendedName>
        <fullName>WD repeat-containing protein 18</fullName>
    </recommendedName>
</protein>
<feature type="chain" id="PRO_0000233181" description="WD repeat-containing protein 18">
    <location>
        <begin position="1"/>
        <end position="431"/>
    </location>
</feature>
<feature type="repeat" description="WD 1">
    <location>
        <begin position="36"/>
        <end position="75"/>
    </location>
</feature>
<feature type="repeat" description="WD 2">
    <location>
        <begin position="78"/>
        <end position="116"/>
    </location>
</feature>
<feature type="repeat" description="WD 3">
    <location>
        <begin position="119"/>
        <end position="158"/>
    </location>
</feature>
<feature type="repeat" description="WD 4">
    <location>
        <begin position="170"/>
        <end position="211"/>
    </location>
</feature>
<feature type="repeat" description="WD 5">
    <location>
        <begin position="213"/>
        <end position="257"/>
    </location>
</feature>
<feature type="repeat" description="WD 6">
    <location>
        <begin position="267"/>
        <end position="306"/>
    </location>
</feature>
<dbReference type="EMBL" id="AK133716">
    <property type="protein sequence ID" value="BAE21796.1"/>
    <property type="molecule type" value="mRNA"/>
</dbReference>
<dbReference type="EMBL" id="AK160713">
    <property type="protein sequence ID" value="BAE35966.1"/>
    <property type="molecule type" value="mRNA"/>
</dbReference>
<dbReference type="EMBL" id="AK168691">
    <property type="protein sequence ID" value="BAE40536.1"/>
    <property type="molecule type" value="mRNA"/>
</dbReference>
<dbReference type="EMBL" id="BC095984">
    <property type="protein sequence ID" value="AAH95984.1"/>
    <property type="molecule type" value="mRNA"/>
</dbReference>
<dbReference type="CCDS" id="CCDS24000.1"/>
<dbReference type="RefSeq" id="NP_780659.2">
    <property type="nucleotide sequence ID" value="NM_175450.5"/>
</dbReference>
<dbReference type="SMR" id="Q4VBE8"/>
<dbReference type="BioGRID" id="229710">
    <property type="interactions" value="17"/>
</dbReference>
<dbReference type="FunCoup" id="Q4VBE8">
    <property type="interactions" value="2169"/>
</dbReference>
<dbReference type="IntAct" id="Q4VBE8">
    <property type="interactions" value="1"/>
</dbReference>
<dbReference type="STRING" id="10090.ENSMUSP00000041049"/>
<dbReference type="iPTMnet" id="Q4VBE8"/>
<dbReference type="PhosphoSitePlus" id="Q4VBE8"/>
<dbReference type="SwissPalm" id="Q4VBE8"/>
<dbReference type="PaxDb" id="10090-ENSMUSP00000041049"/>
<dbReference type="PeptideAtlas" id="Q4VBE8"/>
<dbReference type="ProteomicsDB" id="297938"/>
<dbReference type="Pumba" id="Q4VBE8"/>
<dbReference type="Antibodypedia" id="22464">
    <property type="antibodies" value="148 antibodies from 28 providers"/>
</dbReference>
<dbReference type="DNASU" id="216156"/>
<dbReference type="Ensembl" id="ENSMUST00000045247.9">
    <property type="protein sequence ID" value="ENSMUSP00000041049.8"/>
    <property type="gene ID" value="ENSMUSG00000035754.9"/>
</dbReference>
<dbReference type="GeneID" id="216156"/>
<dbReference type="KEGG" id="mmu:216156"/>
<dbReference type="UCSC" id="uc007gat.1">
    <property type="organism name" value="mouse"/>
</dbReference>
<dbReference type="AGR" id="MGI:2158400"/>
<dbReference type="CTD" id="57418"/>
<dbReference type="MGI" id="MGI:2158400">
    <property type="gene designation" value="Wdr18"/>
</dbReference>
<dbReference type="VEuPathDB" id="HostDB:ENSMUSG00000035754"/>
<dbReference type="eggNOG" id="KOG0646">
    <property type="taxonomic scope" value="Eukaryota"/>
</dbReference>
<dbReference type="GeneTree" id="ENSGT00390000000289"/>
<dbReference type="HOGENOM" id="CLU_029749_0_0_1"/>
<dbReference type="InParanoid" id="Q4VBE8"/>
<dbReference type="OMA" id="GVNARIY"/>
<dbReference type="OrthoDB" id="756370at2759"/>
<dbReference type="PhylomeDB" id="Q4VBE8"/>
<dbReference type="TreeFam" id="TF313046"/>
<dbReference type="Reactome" id="R-MMU-6791226">
    <property type="pathway name" value="Major pathway of rRNA processing in the nucleolus and cytosol"/>
</dbReference>
<dbReference type="BioGRID-ORCS" id="216156">
    <property type="hits" value="27 hits in 77 CRISPR screens"/>
</dbReference>
<dbReference type="ChiTaRS" id="Wdr18">
    <property type="organism name" value="mouse"/>
</dbReference>
<dbReference type="PRO" id="PR:Q4VBE8"/>
<dbReference type="Proteomes" id="UP000000589">
    <property type="component" value="Chromosome 10"/>
</dbReference>
<dbReference type="RNAct" id="Q4VBE8">
    <property type="molecule type" value="protein"/>
</dbReference>
<dbReference type="Bgee" id="ENSMUSG00000035754">
    <property type="expression patterns" value="Expressed in epiblast (generic) and 207 other cell types or tissues"/>
</dbReference>
<dbReference type="GO" id="GO:0120293">
    <property type="term" value="C:dynein axonemal particle"/>
    <property type="evidence" value="ECO:0000250"/>
    <property type="project" value="UniProtKB"/>
</dbReference>
<dbReference type="GO" id="GO:0005730">
    <property type="term" value="C:nucleolus"/>
    <property type="evidence" value="ECO:0007669"/>
    <property type="project" value="UniProtKB-SubCell"/>
</dbReference>
<dbReference type="GO" id="GO:0005654">
    <property type="term" value="C:nucleoplasm"/>
    <property type="evidence" value="ECO:0007669"/>
    <property type="project" value="UniProtKB-SubCell"/>
</dbReference>
<dbReference type="FunFam" id="2.130.10.10:FF:000444">
    <property type="entry name" value="WD repeat domain 18"/>
    <property type="match status" value="1"/>
</dbReference>
<dbReference type="FunFam" id="2.130.10.10:FF:000467">
    <property type="entry name" value="WD repeat domain 18"/>
    <property type="match status" value="1"/>
</dbReference>
<dbReference type="Gene3D" id="2.130.10.10">
    <property type="entry name" value="YVTN repeat-like/Quinoprotein amine dehydrogenase"/>
    <property type="match status" value="2"/>
</dbReference>
<dbReference type="InterPro" id="IPR020472">
    <property type="entry name" value="G-protein_beta_WD-40_rep"/>
</dbReference>
<dbReference type="InterPro" id="IPR015943">
    <property type="entry name" value="WD40/YVTN_repeat-like_dom_sf"/>
</dbReference>
<dbReference type="InterPro" id="IPR019775">
    <property type="entry name" value="WD40_repeat_CS"/>
</dbReference>
<dbReference type="InterPro" id="IPR036322">
    <property type="entry name" value="WD40_repeat_dom_sf"/>
</dbReference>
<dbReference type="InterPro" id="IPR001680">
    <property type="entry name" value="WD40_rpt"/>
</dbReference>
<dbReference type="InterPro" id="IPR045227">
    <property type="entry name" value="WDR18/Ipi3/RID3"/>
</dbReference>
<dbReference type="InterPro" id="IPR026987">
    <property type="entry name" value="Wdr18_C_dom"/>
</dbReference>
<dbReference type="PANTHER" id="PTHR18763:SF0">
    <property type="entry name" value="WD REPEAT-CONTAINING PROTEIN 18"/>
    <property type="match status" value="1"/>
</dbReference>
<dbReference type="PANTHER" id="PTHR18763">
    <property type="entry name" value="WD-REPEAT PROTEIN 18"/>
    <property type="match status" value="1"/>
</dbReference>
<dbReference type="Pfam" id="PF00400">
    <property type="entry name" value="WD40"/>
    <property type="match status" value="3"/>
</dbReference>
<dbReference type="Pfam" id="PF14077">
    <property type="entry name" value="WD40_alt"/>
    <property type="match status" value="1"/>
</dbReference>
<dbReference type="PRINTS" id="PR00320">
    <property type="entry name" value="GPROTEINBRPT"/>
</dbReference>
<dbReference type="SMART" id="SM00320">
    <property type="entry name" value="WD40"/>
    <property type="match status" value="5"/>
</dbReference>
<dbReference type="SUPFAM" id="SSF50978">
    <property type="entry name" value="WD40 repeat-like"/>
    <property type="match status" value="1"/>
</dbReference>
<dbReference type="PROSITE" id="PS00678">
    <property type="entry name" value="WD_REPEATS_1"/>
    <property type="match status" value="1"/>
</dbReference>
<dbReference type="PROSITE" id="PS50082">
    <property type="entry name" value="WD_REPEATS_2"/>
    <property type="match status" value="3"/>
</dbReference>
<dbReference type="PROSITE" id="PS50294">
    <property type="entry name" value="WD_REPEATS_REGION"/>
    <property type="match status" value="1"/>
</dbReference>
<comment type="function">
    <text evidence="2 3 4">Functions as a component of the Five Friends of Methylated CHTOP (5FMC) complex; the 5FMC complex is recruited to ZNF148 by methylated CHTOP, leading to desumoylation of ZNF148 and subsequent transactivation of ZNF148 target genes (PubMed:22872859). Component of the PELP1 complex involved in the nucleolar steps of 28S rRNA maturation and the subsequent nucleoplasmic transit of the pre-60S ribosomal subunit (By similarity). May play a role during development (By similarity).</text>
</comment>
<comment type="subunit">
    <text evidence="3 4">Component of the 5FMC complex, at least composed of PELP1, LAS1L, TEX10, WDR18 and SENP3; the complex interacts with methylated CHTOP and ZNF148. Interacts with NOL9 (PubMed:22872859). Component of the PELP1 complex, composed of at least PELP1, TEX10 and WDR18. The complex interacts with pre-60S ribosome particles (By similarity).</text>
</comment>
<comment type="subcellular location">
    <subcellularLocation>
        <location evidence="3">Nucleus</location>
        <location evidence="3">Nucleolus</location>
    </subcellularLocation>
    <subcellularLocation>
        <location evidence="4">Nucleus</location>
        <location evidence="4">Nucleoplasm</location>
    </subcellularLocation>
    <subcellularLocation>
        <location evidence="4">Cytoplasm</location>
    </subcellularLocation>
    <subcellularLocation>
        <location evidence="1">Dynein axonemal particle</location>
    </subcellularLocation>
    <text evidence="4">Mainly found in the nucleoplasm, with low levels detected in the cytoplasmic and chromatin fractions.</text>
</comment>
<comment type="similarity">
    <text evidence="5">Belongs to the WD repeat IPI3/WDR18 family.</text>
</comment>
<keyword id="KW-0963">Cytoplasm</keyword>
<keyword id="KW-0217">Developmental protein</keyword>
<keyword id="KW-0539">Nucleus</keyword>
<keyword id="KW-1185">Reference proteome</keyword>
<keyword id="KW-0677">Repeat</keyword>
<keyword id="KW-0853">WD repeat</keyword>
<accession>Q4VBE8</accession>